<evidence type="ECO:0000255" key="1">
    <source>
        <dbReference type="HAMAP-Rule" id="MF_01702"/>
    </source>
</evidence>
<sequence length="270" mass="30695">MGLLTPNSLPLLDVQHLTDEQTALAVERLNLFYGDKQVLHDISFCVPKHRVTALIGPSGCGKSTLLRCFNRMNDLLDNCHFDGEIRLGDEIITDKTTDVAALRRRVGMVFQRPNPFPKSIYENVVYGLRLQGVRDRRVLDEAVERSLRAAALWHEVKDRLRENAFRLSSGQQQRLVIARAIAIEPEVLLLDEPTSALDPISTLTIEELITTLKQQYTVVLVTHNMQQAARVSDYTAFIHQGRLVEYNNTDALFTSPYQRQTEDYITGRYG</sequence>
<comment type="function">
    <text evidence="1">Part of the ABC transporter complex PstSACB involved in phosphate import. Responsible for energy coupling to the transport system.</text>
</comment>
<comment type="catalytic activity">
    <reaction evidence="1">
        <text>phosphate(out) + ATP + H2O = ADP + 2 phosphate(in) + H(+)</text>
        <dbReference type="Rhea" id="RHEA:24440"/>
        <dbReference type="ChEBI" id="CHEBI:15377"/>
        <dbReference type="ChEBI" id="CHEBI:15378"/>
        <dbReference type="ChEBI" id="CHEBI:30616"/>
        <dbReference type="ChEBI" id="CHEBI:43474"/>
        <dbReference type="ChEBI" id="CHEBI:456216"/>
        <dbReference type="EC" id="7.3.2.1"/>
    </reaction>
</comment>
<comment type="subunit">
    <text evidence="1">The complex is composed of two ATP-binding proteins (PstB), two transmembrane proteins (PstC and PstA) and a solute-binding protein (PstS).</text>
</comment>
<comment type="subcellular location">
    <subcellularLocation>
        <location evidence="1">Cell inner membrane</location>
        <topology evidence="1">Peripheral membrane protein</topology>
    </subcellularLocation>
</comment>
<comment type="similarity">
    <text evidence="1">Belongs to the ABC transporter superfamily. Phosphate importer (TC 3.A.1.7) family.</text>
</comment>
<keyword id="KW-0067">ATP-binding</keyword>
<keyword id="KW-0997">Cell inner membrane</keyword>
<keyword id="KW-1003">Cell membrane</keyword>
<keyword id="KW-0472">Membrane</keyword>
<keyword id="KW-0547">Nucleotide-binding</keyword>
<keyword id="KW-0592">Phosphate transport</keyword>
<keyword id="KW-1278">Translocase</keyword>
<keyword id="KW-0813">Transport</keyword>
<organism>
    <name type="scientific">Yersinia pseudotuberculosis serotype I (strain IP32953)</name>
    <dbReference type="NCBI Taxonomy" id="273123"/>
    <lineage>
        <taxon>Bacteria</taxon>
        <taxon>Pseudomonadati</taxon>
        <taxon>Pseudomonadota</taxon>
        <taxon>Gammaproteobacteria</taxon>
        <taxon>Enterobacterales</taxon>
        <taxon>Yersiniaceae</taxon>
        <taxon>Yersinia</taxon>
    </lineage>
</organism>
<protein>
    <recommendedName>
        <fullName evidence="1">Phosphate import ATP-binding protein PstB 1</fullName>
        <ecNumber evidence="1">7.3.2.1</ecNumber>
    </recommendedName>
    <alternativeName>
        <fullName evidence="1">ABC phosphate transporter 1</fullName>
    </alternativeName>
    <alternativeName>
        <fullName evidence="1">Phosphate-transporting ATPase 1</fullName>
    </alternativeName>
</protein>
<dbReference type="EC" id="7.3.2.1" evidence="1"/>
<dbReference type="EMBL" id="BX936398">
    <property type="protein sequence ID" value="CAH22037.1"/>
    <property type="molecule type" value="Genomic_DNA"/>
</dbReference>
<dbReference type="SMR" id="Q668E1"/>
<dbReference type="KEGG" id="ypo:BZ17_3832"/>
<dbReference type="KEGG" id="yps:YPTB2799"/>
<dbReference type="PATRIC" id="fig|273123.14.peg.4022"/>
<dbReference type="Proteomes" id="UP000001011">
    <property type="component" value="Chromosome"/>
</dbReference>
<dbReference type="GO" id="GO:0005886">
    <property type="term" value="C:plasma membrane"/>
    <property type="evidence" value="ECO:0007669"/>
    <property type="project" value="UniProtKB-SubCell"/>
</dbReference>
<dbReference type="GO" id="GO:0005524">
    <property type="term" value="F:ATP binding"/>
    <property type="evidence" value="ECO:0007669"/>
    <property type="project" value="UniProtKB-KW"/>
</dbReference>
<dbReference type="GO" id="GO:0016887">
    <property type="term" value="F:ATP hydrolysis activity"/>
    <property type="evidence" value="ECO:0007669"/>
    <property type="project" value="InterPro"/>
</dbReference>
<dbReference type="GO" id="GO:0015415">
    <property type="term" value="F:ATPase-coupled phosphate ion transmembrane transporter activity"/>
    <property type="evidence" value="ECO:0007669"/>
    <property type="project" value="UniProtKB-EC"/>
</dbReference>
<dbReference type="GO" id="GO:0035435">
    <property type="term" value="P:phosphate ion transmembrane transport"/>
    <property type="evidence" value="ECO:0007669"/>
    <property type="project" value="InterPro"/>
</dbReference>
<dbReference type="CDD" id="cd03260">
    <property type="entry name" value="ABC_PstB_phosphate_transporter"/>
    <property type="match status" value="1"/>
</dbReference>
<dbReference type="FunFam" id="3.40.50.300:FF:000132">
    <property type="entry name" value="Phosphate import ATP-binding protein PstB"/>
    <property type="match status" value="1"/>
</dbReference>
<dbReference type="Gene3D" id="3.40.50.300">
    <property type="entry name" value="P-loop containing nucleotide triphosphate hydrolases"/>
    <property type="match status" value="1"/>
</dbReference>
<dbReference type="InterPro" id="IPR003593">
    <property type="entry name" value="AAA+_ATPase"/>
</dbReference>
<dbReference type="InterPro" id="IPR003439">
    <property type="entry name" value="ABC_transporter-like_ATP-bd"/>
</dbReference>
<dbReference type="InterPro" id="IPR017871">
    <property type="entry name" value="ABC_transporter-like_CS"/>
</dbReference>
<dbReference type="InterPro" id="IPR027417">
    <property type="entry name" value="P-loop_NTPase"/>
</dbReference>
<dbReference type="InterPro" id="IPR005670">
    <property type="entry name" value="PstB-like"/>
</dbReference>
<dbReference type="NCBIfam" id="TIGR00972">
    <property type="entry name" value="3a0107s01c2"/>
    <property type="match status" value="1"/>
</dbReference>
<dbReference type="PANTHER" id="PTHR43423">
    <property type="entry name" value="ABC TRANSPORTER I FAMILY MEMBER 17"/>
    <property type="match status" value="1"/>
</dbReference>
<dbReference type="PANTHER" id="PTHR43423:SF12">
    <property type="entry name" value="IRON EXPORT ATP-BINDING PROTEIN FETA-RELATED"/>
    <property type="match status" value="1"/>
</dbReference>
<dbReference type="Pfam" id="PF00005">
    <property type="entry name" value="ABC_tran"/>
    <property type="match status" value="1"/>
</dbReference>
<dbReference type="SMART" id="SM00382">
    <property type="entry name" value="AAA"/>
    <property type="match status" value="1"/>
</dbReference>
<dbReference type="SUPFAM" id="SSF52540">
    <property type="entry name" value="P-loop containing nucleoside triphosphate hydrolases"/>
    <property type="match status" value="1"/>
</dbReference>
<dbReference type="PROSITE" id="PS00211">
    <property type="entry name" value="ABC_TRANSPORTER_1"/>
    <property type="match status" value="1"/>
</dbReference>
<dbReference type="PROSITE" id="PS50893">
    <property type="entry name" value="ABC_TRANSPORTER_2"/>
    <property type="match status" value="1"/>
</dbReference>
<dbReference type="PROSITE" id="PS51238">
    <property type="entry name" value="PSTB"/>
    <property type="match status" value="1"/>
</dbReference>
<accession>Q668E1</accession>
<feature type="chain" id="PRO_0000092939" description="Phosphate import ATP-binding protein PstB 1">
    <location>
        <begin position="1"/>
        <end position="270"/>
    </location>
</feature>
<feature type="domain" description="ABC transporter" evidence="1">
    <location>
        <begin position="24"/>
        <end position="265"/>
    </location>
</feature>
<feature type="binding site" evidence="1">
    <location>
        <begin position="56"/>
        <end position="63"/>
    </location>
    <ligand>
        <name>ATP</name>
        <dbReference type="ChEBI" id="CHEBI:30616"/>
    </ligand>
</feature>
<gene>
    <name evidence="1" type="primary">pstB1</name>
    <name type="ordered locus">YPTB2799</name>
</gene>
<name>PSTB1_YERPS</name>
<proteinExistence type="inferred from homology"/>
<reference key="1">
    <citation type="journal article" date="2004" name="Proc. Natl. Acad. Sci. U.S.A.">
        <title>Insights into the evolution of Yersinia pestis through whole-genome comparison with Yersinia pseudotuberculosis.</title>
        <authorList>
            <person name="Chain P.S.G."/>
            <person name="Carniel E."/>
            <person name="Larimer F.W."/>
            <person name="Lamerdin J."/>
            <person name="Stoutland P.O."/>
            <person name="Regala W.M."/>
            <person name="Georgescu A.M."/>
            <person name="Vergez L.M."/>
            <person name="Land M.L."/>
            <person name="Motin V.L."/>
            <person name="Brubaker R.R."/>
            <person name="Fowler J."/>
            <person name="Hinnebusch J."/>
            <person name="Marceau M."/>
            <person name="Medigue C."/>
            <person name="Simonet M."/>
            <person name="Chenal-Francisque V."/>
            <person name="Souza B."/>
            <person name="Dacheux D."/>
            <person name="Elliott J.M."/>
            <person name="Derbise A."/>
            <person name="Hauser L.J."/>
            <person name="Garcia E."/>
        </authorList>
    </citation>
    <scope>NUCLEOTIDE SEQUENCE [LARGE SCALE GENOMIC DNA]</scope>
    <source>
        <strain>IP32953</strain>
    </source>
</reference>